<reference evidence="6" key="1">
    <citation type="journal article" date="2007" name="Nature">
        <title>Evolution of genes and genomes on the Drosophila phylogeny.</title>
        <authorList>
            <consortium name="Drosophila 12 genomes consortium"/>
        </authorList>
    </citation>
    <scope>NUCLEOTIDE SEQUENCE [LARGE SCALE GENOMIC DNA]</scope>
    <source>
        <strain evidence="6">Tai18E2 / Tucson 14021-0261.01</strain>
    </source>
</reference>
<name>NAAT1_DROYA</name>
<feature type="chain" id="PRO_0000386590" description="Sodium-dependent nutrient amino acid transporter 1">
    <location>
        <begin position="1"/>
        <end position="641"/>
    </location>
</feature>
<feature type="topological domain" description="Cytoplasmic" evidence="3">
    <location>
        <begin position="1"/>
        <end position="38"/>
    </location>
</feature>
<feature type="transmembrane region" description="Helical; Name=1" evidence="3">
    <location>
        <begin position="39"/>
        <end position="59"/>
    </location>
</feature>
<feature type="transmembrane region" description="Helical; Name=2" evidence="3">
    <location>
        <begin position="72"/>
        <end position="92"/>
    </location>
</feature>
<feature type="transmembrane region" description="Helical; Name=3" evidence="3">
    <location>
        <begin position="109"/>
        <end position="129"/>
    </location>
</feature>
<feature type="transmembrane region" description="Helical; Name=4" evidence="3">
    <location>
        <begin position="229"/>
        <end position="249"/>
    </location>
</feature>
<feature type="transmembrane region" description="Helical; Name=5" evidence="3">
    <location>
        <begin position="258"/>
        <end position="278"/>
    </location>
</feature>
<feature type="transmembrane region" description="Helical; Name=6" evidence="3">
    <location>
        <begin position="307"/>
        <end position="327"/>
    </location>
</feature>
<feature type="transmembrane region" description="Helical; Name=7" evidence="3">
    <location>
        <begin position="341"/>
        <end position="361"/>
    </location>
</feature>
<feature type="transmembrane region" description="Helical; Name=8" evidence="3">
    <location>
        <begin position="401"/>
        <end position="421"/>
    </location>
</feature>
<feature type="transmembrane region" description="Helical; Name=9" evidence="3">
    <location>
        <begin position="441"/>
        <end position="461"/>
    </location>
</feature>
<feature type="transmembrane region" description="Helical; Name=10" evidence="3">
    <location>
        <begin position="474"/>
        <end position="494"/>
    </location>
</feature>
<feature type="transmembrane region" description="Helical; Name=11" evidence="3">
    <location>
        <begin position="516"/>
        <end position="536"/>
    </location>
</feature>
<feature type="transmembrane region" description="Helical; Name=12" evidence="3">
    <location>
        <begin position="552"/>
        <end position="572"/>
    </location>
</feature>
<feature type="region of interest" description="Disordered" evidence="4">
    <location>
        <begin position="1"/>
        <end position="34"/>
    </location>
</feature>
<feature type="compositionally biased region" description="Low complexity" evidence="4">
    <location>
        <begin position="9"/>
        <end position="24"/>
    </location>
</feature>
<feature type="compositionally biased region" description="Basic and acidic residues" evidence="4">
    <location>
        <begin position="25"/>
        <end position="34"/>
    </location>
</feature>
<feature type="glycosylation site" description="N-linked (GlcNAc...) asparagine" evidence="3">
    <location>
        <position position="183"/>
    </location>
</feature>
<feature type="glycosylation site" description="N-linked (GlcNAc...) asparagine" evidence="3">
    <location>
        <position position="188"/>
    </location>
</feature>
<accession>B4PZQ4</accession>
<organism>
    <name type="scientific">Drosophila yakuba</name>
    <name type="common">Fruit fly</name>
    <dbReference type="NCBI Taxonomy" id="7245"/>
    <lineage>
        <taxon>Eukaryota</taxon>
        <taxon>Metazoa</taxon>
        <taxon>Ecdysozoa</taxon>
        <taxon>Arthropoda</taxon>
        <taxon>Hexapoda</taxon>
        <taxon>Insecta</taxon>
        <taxon>Pterygota</taxon>
        <taxon>Neoptera</taxon>
        <taxon>Endopterygota</taxon>
        <taxon>Diptera</taxon>
        <taxon>Brachycera</taxon>
        <taxon>Muscomorpha</taxon>
        <taxon>Ephydroidea</taxon>
        <taxon>Drosophilidae</taxon>
        <taxon>Drosophila</taxon>
        <taxon>Sophophora</taxon>
    </lineage>
</organism>
<sequence>MELKGVQPSNGSANGNGTTNAASTEKADTEKQTAERTNWGNGLEFLMSCISVSVGLGNVWRFPFTAYENGGGAFLIPYIIVLFLIGKPMYYLEMIMGQFTSQGTVKIWSVVPGFVGVGYGQAFGTICIISYYSSLLALTLYYLFVSFQSELPWSYCRDEWTNCVNSRPQEYVDNLLTGVSLANESARNLSGIGFVANDETEKLQSSSELYFLNVVIKEKLDISDGVGDPDWKLTLALFVAWVVIFLVIMRGVKSSGKAAYFLALFPYVVLFVLLIRAVTLEGARDGILFFLEPQWGELLNPTVWKEAVVQCFFSLAVGSGPIIMFASYNRFDHGIYRDAMIVTTLDTLTSLLGGITIFAILGNLAHNLQIENIRDVVRSGTGLAFISYPDAISKFQAVPQLFSVLFFFMLFVLGIGSIVALQSTIVTIICDQFKGLKYWKVALITSACGFLMGLVYVTPGGQWILTLVDFYGGTYVVFILAIFELAGIVWVYGLQNFCDDIEFMCNRRVSLYWRMCWSFFTPVMMIIIFIYSMATIEPIKYSELYFPEAANIAGWLLFAIGAAQFPLWGLWYASTHPQGTYWKSLKASLKPSDRWGPANPETRREWVIFKNQKAAQRATQKSTSKLGFFWRKLTNFCGSNK</sequence>
<protein>
    <recommendedName>
        <fullName evidence="2">Sodium-dependent nutrient amino acid transporter 1</fullName>
    </recommendedName>
</protein>
<evidence type="ECO:0000250" key="1"/>
<evidence type="ECO:0000250" key="2">
    <source>
        <dbReference type="UniProtKB" id="Q9W4C5"/>
    </source>
</evidence>
<evidence type="ECO:0000255" key="3"/>
<evidence type="ECO:0000256" key="4">
    <source>
        <dbReference type="SAM" id="MobiDB-lite"/>
    </source>
</evidence>
<evidence type="ECO:0000305" key="5"/>
<evidence type="ECO:0000312" key="6">
    <source>
        <dbReference type="EMBL" id="EDX01121.1"/>
    </source>
</evidence>
<dbReference type="EMBL" id="CM000162">
    <property type="protein sequence ID" value="EDX01121.1"/>
    <property type="molecule type" value="Genomic_DNA"/>
</dbReference>
<dbReference type="SMR" id="B4PZQ4"/>
<dbReference type="GlyCosmos" id="B4PZQ4">
    <property type="glycosylation" value="2 sites, No reported glycans"/>
</dbReference>
<dbReference type="EnsemblMetazoa" id="FBtr0263334">
    <property type="protein sequence ID" value="FBpp0261826"/>
    <property type="gene ID" value="FBgn0234308"/>
</dbReference>
<dbReference type="EnsemblMetazoa" id="XM_002099977.4">
    <property type="protein sequence ID" value="XP_002100013.1"/>
    <property type="gene ID" value="LOC6524150"/>
</dbReference>
<dbReference type="GeneID" id="6524150"/>
<dbReference type="KEGG" id="dya:Dyak_GE16816"/>
<dbReference type="CTD" id="31457"/>
<dbReference type="eggNOG" id="KOG3660">
    <property type="taxonomic scope" value="Eukaryota"/>
</dbReference>
<dbReference type="HOGENOM" id="CLU_006855_9_5_1"/>
<dbReference type="OMA" id="LQNFCDD"/>
<dbReference type="OrthoDB" id="6581954at2759"/>
<dbReference type="PhylomeDB" id="B4PZQ4"/>
<dbReference type="Proteomes" id="UP000002282">
    <property type="component" value="Chromosome X"/>
</dbReference>
<dbReference type="GO" id="GO:0005886">
    <property type="term" value="C:plasma membrane"/>
    <property type="evidence" value="ECO:0000305"/>
    <property type="project" value="UniProtKB"/>
</dbReference>
<dbReference type="GO" id="GO:0005283">
    <property type="term" value="F:amino acid:sodium symporter activity"/>
    <property type="evidence" value="ECO:0000250"/>
    <property type="project" value="UniProtKB"/>
</dbReference>
<dbReference type="GO" id="GO:0042943">
    <property type="term" value="F:D-amino acid transmembrane transporter activity"/>
    <property type="evidence" value="ECO:0000250"/>
    <property type="project" value="UniProtKB"/>
</dbReference>
<dbReference type="GO" id="GO:0015179">
    <property type="term" value="F:L-amino acid transmembrane transporter activity"/>
    <property type="evidence" value="ECO:0007669"/>
    <property type="project" value="EnsemblMetazoa"/>
</dbReference>
<dbReference type="GO" id="GO:0015175">
    <property type="term" value="F:neutral L-amino acid transmembrane transporter activity"/>
    <property type="evidence" value="ECO:0000250"/>
    <property type="project" value="UniProtKB"/>
</dbReference>
<dbReference type="GO" id="GO:0089718">
    <property type="term" value="P:amino acid import across plasma membrane"/>
    <property type="evidence" value="ECO:0007669"/>
    <property type="project" value="TreeGrafter"/>
</dbReference>
<dbReference type="GO" id="GO:0042940">
    <property type="term" value="P:D-amino acid transport"/>
    <property type="evidence" value="ECO:0000250"/>
    <property type="project" value="UniProtKB"/>
</dbReference>
<dbReference type="GO" id="GO:0015804">
    <property type="term" value="P:neutral amino acid transport"/>
    <property type="evidence" value="ECO:0000250"/>
    <property type="project" value="UniProtKB"/>
</dbReference>
<dbReference type="GO" id="GO:0006814">
    <property type="term" value="P:sodium ion transport"/>
    <property type="evidence" value="ECO:0000250"/>
    <property type="project" value="UniProtKB"/>
</dbReference>
<dbReference type="CDD" id="cd10324">
    <property type="entry name" value="SLC6sbd"/>
    <property type="match status" value="1"/>
</dbReference>
<dbReference type="InterPro" id="IPR000175">
    <property type="entry name" value="Na/ntran_symport"/>
</dbReference>
<dbReference type="InterPro" id="IPR037272">
    <property type="entry name" value="SNS_sf"/>
</dbReference>
<dbReference type="NCBIfam" id="NF037979">
    <property type="entry name" value="Na_transp"/>
    <property type="match status" value="1"/>
</dbReference>
<dbReference type="PANTHER" id="PTHR11616:SF321">
    <property type="entry name" value="SODIUM-DEPENDENT NUTRIENT AMINO ACID TRANSPORTER 1-RELATED"/>
    <property type="match status" value="1"/>
</dbReference>
<dbReference type="PANTHER" id="PTHR11616">
    <property type="entry name" value="SODIUM/CHLORIDE DEPENDENT TRANSPORTER"/>
    <property type="match status" value="1"/>
</dbReference>
<dbReference type="Pfam" id="PF00209">
    <property type="entry name" value="SNF"/>
    <property type="match status" value="1"/>
</dbReference>
<dbReference type="PRINTS" id="PR00176">
    <property type="entry name" value="NANEUSMPORT"/>
</dbReference>
<dbReference type="SUPFAM" id="SSF161070">
    <property type="entry name" value="SNF-like"/>
    <property type="match status" value="1"/>
</dbReference>
<dbReference type="PROSITE" id="PS00610">
    <property type="entry name" value="NA_NEUROTRAN_SYMP_1"/>
    <property type="match status" value="1"/>
</dbReference>
<dbReference type="PROSITE" id="PS00754">
    <property type="entry name" value="NA_NEUROTRAN_SYMP_2"/>
    <property type="match status" value="1"/>
</dbReference>
<dbReference type="PROSITE" id="PS50267">
    <property type="entry name" value="NA_NEUROTRAN_SYMP_3"/>
    <property type="match status" value="1"/>
</dbReference>
<keyword id="KW-0029">Amino-acid transport</keyword>
<keyword id="KW-0325">Glycoprotein</keyword>
<keyword id="KW-0406">Ion transport</keyword>
<keyword id="KW-0472">Membrane</keyword>
<keyword id="KW-0915">Sodium</keyword>
<keyword id="KW-0739">Sodium transport</keyword>
<keyword id="KW-0769">Symport</keyword>
<keyword id="KW-0812">Transmembrane</keyword>
<keyword id="KW-1133">Transmembrane helix</keyword>
<keyword id="KW-0813">Transport</keyword>
<proteinExistence type="inferred from homology"/>
<comment type="function">
    <text evidence="1">Unusual broad substrate spectrum amino acid:sodium cotransporter that promotes absorption of the D isomers of essential amino acids. Neutral amino acids are the preferred substrates, especially methionine and phenylalanine (By similarity).</text>
</comment>
<comment type="subcellular location">
    <subcellularLocation>
        <location evidence="5">Membrane</location>
        <topology evidence="5">Multi-pass membrane protein</topology>
    </subcellularLocation>
</comment>
<comment type="similarity">
    <text evidence="5">Belongs to the sodium:neurotransmitter symporter (SNF) (TC 2.A.22) family.</text>
</comment>
<gene>
    <name evidence="2" type="primary">NAAT1</name>
    <name type="ORF">GE16816</name>
</gene>